<keyword id="KW-0378">Hydrolase</keyword>
<keyword id="KW-0479">Metal-binding</keyword>
<keyword id="KW-0482">Metalloprotease</keyword>
<keyword id="KW-0645">Protease</keyword>
<keyword id="KW-0862">Zinc</keyword>
<name>Y959_STRPC</name>
<dbReference type="EMBL" id="CP000259">
    <property type="protein sequence ID" value="ABF32146.1"/>
    <property type="molecule type" value="Genomic_DNA"/>
</dbReference>
<dbReference type="SMR" id="Q1JLS3"/>
<dbReference type="KEGG" id="spk:MGAS9429_Spy0959"/>
<dbReference type="HOGENOM" id="CLU_073529_0_2_9"/>
<dbReference type="Proteomes" id="UP000002433">
    <property type="component" value="Chromosome"/>
</dbReference>
<dbReference type="GO" id="GO:0046872">
    <property type="term" value="F:metal ion binding"/>
    <property type="evidence" value="ECO:0007669"/>
    <property type="project" value="UniProtKB-KW"/>
</dbReference>
<dbReference type="GO" id="GO:0008237">
    <property type="term" value="F:metallopeptidase activity"/>
    <property type="evidence" value="ECO:0007669"/>
    <property type="project" value="UniProtKB-KW"/>
</dbReference>
<dbReference type="GO" id="GO:0006508">
    <property type="term" value="P:proteolysis"/>
    <property type="evidence" value="ECO:0007669"/>
    <property type="project" value="UniProtKB-KW"/>
</dbReference>
<dbReference type="CDD" id="cd08071">
    <property type="entry name" value="MPN_DUF2466"/>
    <property type="match status" value="1"/>
</dbReference>
<dbReference type="Gene3D" id="3.40.140.10">
    <property type="entry name" value="Cytidine Deaminase, domain 2"/>
    <property type="match status" value="1"/>
</dbReference>
<dbReference type="InterPro" id="IPR037518">
    <property type="entry name" value="MPN"/>
</dbReference>
<dbReference type="InterPro" id="IPR025657">
    <property type="entry name" value="RadC_JAB"/>
</dbReference>
<dbReference type="InterPro" id="IPR010994">
    <property type="entry name" value="RuvA_2-like"/>
</dbReference>
<dbReference type="InterPro" id="IPR001405">
    <property type="entry name" value="UPF0758"/>
</dbReference>
<dbReference type="InterPro" id="IPR020891">
    <property type="entry name" value="UPF0758_CS"/>
</dbReference>
<dbReference type="InterPro" id="IPR046778">
    <property type="entry name" value="UPF0758_N"/>
</dbReference>
<dbReference type="NCBIfam" id="NF000642">
    <property type="entry name" value="PRK00024.1"/>
    <property type="match status" value="1"/>
</dbReference>
<dbReference type="NCBIfam" id="TIGR00608">
    <property type="entry name" value="radc"/>
    <property type="match status" value="1"/>
</dbReference>
<dbReference type="PANTHER" id="PTHR30471">
    <property type="entry name" value="DNA REPAIR PROTEIN RADC"/>
    <property type="match status" value="1"/>
</dbReference>
<dbReference type="PANTHER" id="PTHR30471:SF3">
    <property type="entry name" value="UPF0758 PROTEIN YEES-RELATED"/>
    <property type="match status" value="1"/>
</dbReference>
<dbReference type="Pfam" id="PF04002">
    <property type="entry name" value="RadC"/>
    <property type="match status" value="1"/>
</dbReference>
<dbReference type="Pfam" id="PF20582">
    <property type="entry name" value="UPF0758_N"/>
    <property type="match status" value="1"/>
</dbReference>
<dbReference type="SUPFAM" id="SSF47781">
    <property type="entry name" value="RuvA domain 2-like"/>
    <property type="match status" value="1"/>
</dbReference>
<dbReference type="PROSITE" id="PS50249">
    <property type="entry name" value="MPN"/>
    <property type="match status" value="1"/>
</dbReference>
<dbReference type="PROSITE" id="PS01302">
    <property type="entry name" value="UPF0758"/>
    <property type="match status" value="1"/>
</dbReference>
<sequence>MYSIKCDDNKAMPRERLMRLGAESLSNQELLAILLRTGNKEKHVLELSSYLLSHLDSLADFKKMSLQELQHLAGIGKVKAIEIKAMIELVSRILATDKTLTDSVLTSVQVAEKMMAALGDKKQEHLVVLYLDNQNRIIEEKTIFIGTVRRSLAEPREILYYACKNMATSLIVIHNHPSGNIEPSSNDYCFTEKIKRSCEDLGIICLDHIIVSYKDYYSFREKSTLF</sequence>
<accession>Q1JLS3</accession>
<comment type="similarity">
    <text evidence="2">Belongs to the UPF0758 family.</text>
</comment>
<reference key="1">
    <citation type="journal article" date="2006" name="Proc. Natl. Acad. Sci. U.S.A.">
        <title>Molecular genetic anatomy of inter- and intraserotype variation in the human bacterial pathogen group A Streptococcus.</title>
        <authorList>
            <person name="Beres S.B."/>
            <person name="Richter E.W."/>
            <person name="Nagiec M.J."/>
            <person name="Sumby P."/>
            <person name="Porcella S.F."/>
            <person name="DeLeo F.R."/>
            <person name="Musser J.M."/>
        </authorList>
    </citation>
    <scope>NUCLEOTIDE SEQUENCE [LARGE SCALE GENOMIC DNA]</scope>
    <source>
        <strain>MGAS9429</strain>
    </source>
</reference>
<evidence type="ECO:0000255" key="1">
    <source>
        <dbReference type="PROSITE-ProRule" id="PRU01182"/>
    </source>
</evidence>
<evidence type="ECO:0000305" key="2"/>
<protein>
    <recommendedName>
        <fullName>UPF0758 protein MGAS9429_Spy0959</fullName>
    </recommendedName>
</protein>
<proteinExistence type="inferred from homology"/>
<gene>
    <name type="ordered locus">MGAS9429_Spy0959</name>
</gene>
<feature type="chain" id="PRO_1000089859" description="UPF0758 protein MGAS9429_Spy0959">
    <location>
        <begin position="1"/>
        <end position="226"/>
    </location>
</feature>
<feature type="domain" description="MPN" evidence="1">
    <location>
        <begin position="103"/>
        <end position="225"/>
    </location>
</feature>
<feature type="short sequence motif" description="JAMM motif" evidence="1">
    <location>
        <begin position="174"/>
        <end position="187"/>
    </location>
</feature>
<feature type="binding site" evidence="1">
    <location>
        <position position="174"/>
    </location>
    <ligand>
        <name>Zn(2+)</name>
        <dbReference type="ChEBI" id="CHEBI:29105"/>
        <note>catalytic</note>
    </ligand>
</feature>
<feature type="binding site" evidence="1">
    <location>
        <position position="176"/>
    </location>
    <ligand>
        <name>Zn(2+)</name>
        <dbReference type="ChEBI" id="CHEBI:29105"/>
        <note>catalytic</note>
    </ligand>
</feature>
<feature type="binding site" evidence="1">
    <location>
        <position position="187"/>
    </location>
    <ligand>
        <name>Zn(2+)</name>
        <dbReference type="ChEBI" id="CHEBI:29105"/>
        <note>catalytic</note>
    </ligand>
</feature>
<organism>
    <name type="scientific">Streptococcus pyogenes serotype M12 (strain MGAS9429)</name>
    <dbReference type="NCBI Taxonomy" id="370551"/>
    <lineage>
        <taxon>Bacteria</taxon>
        <taxon>Bacillati</taxon>
        <taxon>Bacillota</taxon>
        <taxon>Bacilli</taxon>
        <taxon>Lactobacillales</taxon>
        <taxon>Streptococcaceae</taxon>
        <taxon>Streptococcus</taxon>
    </lineage>
</organism>